<reference key="1">
    <citation type="journal article" date="1995" name="Neuron">
        <title>Murine semaphorin D/collapsin is a member of a diverse gene family and creates domains inhibitory for axonal extension.</title>
        <authorList>
            <person name="Pueschel A.W."/>
            <person name="Adams R.H."/>
            <person name="Betz H."/>
        </authorList>
    </citation>
    <scope>NUCLEOTIDE SEQUENCE [MRNA]</scope>
    <source>
        <strain>NMRI</strain>
        <tissue>Embryo</tissue>
    </source>
</reference>
<reference key="2">
    <citation type="journal article" date="2009" name="PLoS Biol.">
        <title>Lineage-specific biology revealed by a finished genome assembly of the mouse.</title>
        <authorList>
            <person name="Church D.M."/>
            <person name="Goodstadt L."/>
            <person name="Hillier L.W."/>
            <person name="Zody M.C."/>
            <person name="Goldstein S."/>
            <person name="She X."/>
            <person name="Bult C.J."/>
            <person name="Agarwala R."/>
            <person name="Cherry J.L."/>
            <person name="DiCuccio M."/>
            <person name="Hlavina W."/>
            <person name="Kapustin Y."/>
            <person name="Meric P."/>
            <person name="Maglott D."/>
            <person name="Birtle Z."/>
            <person name="Marques A.C."/>
            <person name="Graves T."/>
            <person name="Zhou S."/>
            <person name="Teague B."/>
            <person name="Potamousis K."/>
            <person name="Churas C."/>
            <person name="Place M."/>
            <person name="Herschleb J."/>
            <person name="Runnheim R."/>
            <person name="Forrest D."/>
            <person name="Amos-Landgraf J."/>
            <person name="Schwartz D.C."/>
            <person name="Cheng Z."/>
            <person name="Lindblad-Toh K."/>
            <person name="Eichler E.E."/>
            <person name="Ponting C.P."/>
        </authorList>
    </citation>
    <scope>NUCLEOTIDE SEQUENCE [LARGE SCALE GENOMIC DNA]</scope>
    <source>
        <strain>C57BL/6J</strain>
    </source>
</reference>
<evidence type="ECO:0000250" key="1"/>
<evidence type="ECO:0000255" key="2"/>
<evidence type="ECO:0000255" key="3">
    <source>
        <dbReference type="PROSITE-ProRule" id="PRU00352"/>
    </source>
</evidence>
<evidence type="ECO:0000256" key="4">
    <source>
        <dbReference type="SAM" id="MobiDB-lite"/>
    </source>
</evidence>
<evidence type="ECO:0000305" key="5"/>
<sequence length="748" mass="82700">MGRAEAAAMIPGLALLWVAGLGDTAPNLPRLRLSFQELQARHGVRTFRLERTCCYEALLVDEERGRLFVGAENHVASLSLDNISKRAKKLAWPAPVEWREECNWAGKDIGTECMNFVKLLHTYNHTHLLACGTGAFHPTCALWRWATAGGTHASTGPEKLEDGKGKTPYDPRHRAASVLVGEELYSGVTADLMGRDFTIFRSLGQNPSLRTEPHDSRWLNEPKFVKVFWIPESENPDDDKIYFFFRESAVEAAPAMGRMSVSRVGQICRNDLGGQRSLVNKWTTFLKARLVCSVPGVEGDTHFDQLQDVFLLSSRDRQTPLLYAVFSTSSGVFQGSAVCVYSMNDVRRAFLGPFAHKEGPTHQWVSYQGRVPYPRPGMCPSKTFGTFSSTKDFPDDVIQFARNHPLMYNPVLPMGGRPLFLQVGAGYTFTQIAADRVAAADGHYDVLFIGTDVGTVLKVISVPKGSRPNSEGLLLEELQVFEDSAAITSMQISSKRQQLYIASRSAVAQIALHRCTALGRACAECCLARDPYCAWDGSACTRFQPTAKRRFRRQDIRNGDPSTLCSGDSSHSVLLEKKVLGVESGSAFLECEPRSLQAHVQWTFQGAGEAAHTQVLAEERVERTARGLLLRGLRRQDSGVYLCVAVEQGFSQPLRRLVLHVLSAAQAERLARAEEAAAPAPPGPKLWYRDFLQLVEPGGGGGANSLRMCRPQPGHHSVAADSRRKGRNRRMHVSELRAERGPRSAAHW</sequence>
<proteinExistence type="evidence at transcript level"/>
<name>SEM3B_MOUSE</name>
<keyword id="KW-0217">Developmental protein</keyword>
<keyword id="KW-0221">Differentiation</keyword>
<keyword id="KW-1015">Disulfide bond</keyword>
<keyword id="KW-0325">Glycoprotein</keyword>
<keyword id="KW-0393">Immunoglobulin domain</keyword>
<keyword id="KW-0524">Neurogenesis</keyword>
<keyword id="KW-1185">Reference proteome</keyword>
<keyword id="KW-0964">Secreted</keyword>
<keyword id="KW-0732">Signal</keyword>
<gene>
    <name type="primary">Sema3b</name>
    <name type="synonym">Sema</name>
    <name type="synonym">Semaa</name>
</gene>
<dbReference type="EMBL" id="X85990">
    <property type="protein sequence ID" value="CAA59982.1"/>
    <property type="molecule type" value="mRNA"/>
</dbReference>
<dbReference type="EMBL" id="AL672219">
    <property type="status" value="NOT_ANNOTATED_CDS"/>
    <property type="molecule type" value="Genomic_DNA"/>
</dbReference>
<dbReference type="PIR" id="I48744">
    <property type="entry name" value="I48744"/>
</dbReference>
<dbReference type="SMR" id="Q62177"/>
<dbReference type="FunCoup" id="Q62177">
    <property type="interactions" value="299"/>
</dbReference>
<dbReference type="STRING" id="10090.ENSMUSP00000099589"/>
<dbReference type="GlyCosmos" id="Q62177">
    <property type="glycosylation" value="2 sites, No reported glycans"/>
</dbReference>
<dbReference type="GlyGen" id="Q62177">
    <property type="glycosylation" value="4 sites, 1 O-linked glycan (2 sites)"/>
</dbReference>
<dbReference type="iPTMnet" id="Q62177"/>
<dbReference type="PhosphoSitePlus" id="Q62177"/>
<dbReference type="PaxDb" id="10090-ENSMUSP00000099591"/>
<dbReference type="PeptideAtlas" id="Q62177"/>
<dbReference type="ProteomicsDB" id="256540"/>
<dbReference type="Pumba" id="Q62177"/>
<dbReference type="AGR" id="MGI:107561"/>
<dbReference type="MGI" id="MGI:107561">
    <property type="gene designation" value="Sema3b"/>
</dbReference>
<dbReference type="eggNOG" id="KOG3611">
    <property type="taxonomic scope" value="Eukaryota"/>
</dbReference>
<dbReference type="InParanoid" id="Q62177"/>
<dbReference type="ChiTaRS" id="Sema3b">
    <property type="organism name" value="mouse"/>
</dbReference>
<dbReference type="PRO" id="PR:Q62177"/>
<dbReference type="Proteomes" id="UP000000589">
    <property type="component" value="Unplaced"/>
</dbReference>
<dbReference type="RNAct" id="Q62177">
    <property type="molecule type" value="protein"/>
</dbReference>
<dbReference type="GO" id="GO:0005576">
    <property type="term" value="C:extracellular region"/>
    <property type="evidence" value="ECO:0007669"/>
    <property type="project" value="UniProtKB-SubCell"/>
</dbReference>
<dbReference type="GO" id="GO:0030215">
    <property type="term" value="F:semaphorin receptor binding"/>
    <property type="evidence" value="ECO:0007669"/>
    <property type="project" value="InterPro"/>
</dbReference>
<dbReference type="GO" id="GO:0030154">
    <property type="term" value="P:cell differentiation"/>
    <property type="evidence" value="ECO:0007669"/>
    <property type="project" value="UniProtKB-KW"/>
</dbReference>
<dbReference type="GO" id="GO:0007399">
    <property type="term" value="P:nervous system development"/>
    <property type="evidence" value="ECO:0007669"/>
    <property type="project" value="UniProtKB-KW"/>
</dbReference>
<dbReference type="GO" id="GO:0071526">
    <property type="term" value="P:semaphorin-plexin signaling pathway"/>
    <property type="evidence" value="ECO:0007669"/>
    <property type="project" value="UniProtKB-ARBA"/>
</dbReference>
<dbReference type="FunFam" id="2.130.10.10:FF:000015">
    <property type="entry name" value="Semaphorin 3B"/>
    <property type="match status" value="1"/>
</dbReference>
<dbReference type="FunFam" id="2.60.40.10:FF:000030">
    <property type="entry name" value="Semaphorin 3F like"/>
    <property type="match status" value="1"/>
</dbReference>
<dbReference type="FunFam" id="3.30.1680.10:FF:000008">
    <property type="entry name" value="semaphorin-3B isoform X1"/>
    <property type="match status" value="1"/>
</dbReference>
<dbReference type="Gene3D" id="2.60.40.10">
    <property type="entry name" value="Immunoglobulins"/>
    <property type="match status" value="1"/>
</dbReference>
<dbReference type="Gene3D" id="3.30.1680.10">
    <property type="entry name" value="ligand-binding face of the semaphorins, domain 2"/>
    <property type="match status" value="1"/>
</dbReference>
<dbReference type="Gene3D" id="2.130.10.10">
    <property type="entry name" value="YVTN repeat-like/Quinoprotein amine dehydrogenase"/>
    <property type="match status" value="1"/>
</dbReference>
<dbReference type="InterPro" id="IPR007110">
    <property type="entry name" value="Ig-like_dom"/>
</dbReference>
<dbReference type="InterPro" id="IPR036179">
    <property type="entry name" value="Ig-like_dom_sf"/>
</dbReference>
<dbReference type="InterPro" id="IPR013783">
    <property type="entry name" value="Ig-like_fold"/>
</dbReference>
<dbReference type="InterPro" id="IPR003599">
    <property type="entry name" value="Ig_sub"/>
</dbReference>
<dbReference type="InterPro" id="IPR013151">
    <property type="entry name" value="Immunoglobulin_dom"/>
</dbReference>
<dbReference type="InterPro" id="IPR016201">
    <property type="entry name" value="PSI"/>
</dbReference>
<dbReference type="InterPro" id="IPR001627">
    <property type="entry name" value="Semap_dom"/>
</dbReference>
<dbReference type="InterPro" id="IPR036352">
    <property type="entry name" value="Semap_dom_sf"/>
</dbReference>
<dbReference type="InterPro" id="IPR027231">
    <property type="entry name" value="Semaphorin"/>
</dbReference>
<dbReference type="InterPro" id="IPR015943">
    <property type="entry name" value="WD40/YVTN_repeat-like_dom_sf"/>
</dbReference>
<dbReference type="PANTHER" id="PTHR11036">
    <property type="entry name" value="SEMAPHORIN"/>
    <property type="match status" value="1"/>
</dbReference>
<dbReference type="PANTHER" id="PTHR11036:SF37">
    <property type="entry name" value="SEMAPHORIN-3B"/>
    <property type="match status" value="1"/>
</dbReference>
<dbReference type="Pfam" id="PF00047">
    <property type="entry name" value="ig"/>
    <property type="match status" value="1"/>
</dbReference>
<dbReference type="Pfam" id="PF01403">
    <property type="entry name" value="Sema"/>
    <property type="match status" value="1"/>
</dbReference>
<dbReference type="SMART" id="SM00409">
    <property type="entry name" value="IG"/>
    <property type="match status" value="1"/>
</dbReference>
<dbReference type="SMART" id="SM00423">
    <property type="entry name" value="PSI"/>
    <property type="match status" value="1"/>
</dbReference>
<dbReference type="SMART" id="SM00630">
    <property type="entry name" value="Sema"/>
    <property type="match status" value="1"/>
</dbReference>
<dbReference type="SUPFAM" id="SSF48726">
    <property type="entry name" value="Immunoglobulin"/>
    <property type="match status" value="1"/>
</dbReference>
<dbReference type="SUPFAM" id="SSF103575">
    <property type="entry name" value="Plexin repeat"/>
    <property type="match status" value="1"/>
</dbReference>
<dbReference type="SUPFAM" id="SSF101912">
    <property type="entry name" value="Sema domain"/>
    <property type="match status" value="1"/>
</dbReference>
<dbReference type="PROSITE" id="PS50835">
    <property type="entry name" value="IG_LIKE"/>
    <property type="match status" value="1"/>
</dbReference>
<dbReference type="PROSITE" id="PS51004">
    <property type="entry name" value="SEMA"/>
    <property type="match status" value="1"/>
</dbReference>
<feature type="signal peptide" evidence="2">
    <location>
        <begin position="1"/>
        <end position="25"/>
    </location>
</feature>
<feature type="chain" id="PRO_0000032310" description="Semaphorin-3B">
    <location>
        <begin position="26"/>
        <end position="748"/>
    </location>
</feature>
<feature type="domain" description="Sema" evidence="3">
    <location>
        <begin position="30"/>
        <end position="512"/>
    </location>
</feature>
<feature type="domain" description="Ig-like C2-type">
    <location>
        <begin position="561"/>
        <end position="659"/>
    </location>
</feature>
<feature type="region of interest" description="Disordered" evidence="4">
    <location>
        <begin position="708"/>
        <end position="748"/>
    </location>
</feature>
<feature type="compositionally biased region" description="Basic and acidic residues" evidence="4">
    <location>
        <begin position="732"/>
        <end position="742"/>
    </location>
</feature>
<feature type="glycosylation site" description="N-linked (GlcNAc...) asparagine" evidence="2">
    <location>
        <position position="82"/>
    </location>
</feature>
<feature type="glycosylation site" description="N-linked (GlcNAc...) asparagine" evidence="2">
    <location>
        <position position="124"/>
    </location>
</feature>
<feature type="disulfide bond" evidence="1">
    <location>
        <begin position="102"/>
        <end position="113"/>
    </location>
</feature>
<feature type="disulfide bond" evidence="1">
    <location>
        <begin position="131"/>
        <end position="140"/>
    </location>
</feature>
<feature type="disulfide bond" evidence="1">
    <location>
        <begin position="268"/>
        <end position="379"/>
    </location>
</feature>
<feature type="disulfide bond" evidence="1">
    <location>
        <begin position="292"/>
        <end position="339"/>
    </location>
</feature>
<feature type="disulfide bond" evidence="1">
    <location>
        <begin position="515"/>
        <end position="533"/>
    </location>
</feature>
<feature type="disulfide bond" evidence="1">
    <location>
        <begin position="643"/>
        <end position="709"/>
    </location>
</feature>
<feature type="sequence conflict" description="In Ref. 1; CAA59982." evidence="5" ref="1">
    <original>A</original>
    <variation>V</variation>
    <location>
        <position position="8"/>
    </location>
</feature>
<feature type="sequence conflict" description="In Ref. 1; CAA59982." evidence="5" ref="1">
    <original>K</original>
    <variation>R</variation>
    <location>
        <position position="118"/>
    </location>
</feature>
<feature type="sequence conflict" description="In Ref. 1; CAA59982." evidence="5" ref="1">
    <original>T</original>
    <variation>A</variation>
    <location>
        <position position="122"/>
    </location>
</feature>
<feature type="sequence conflict" description="In Ref. 1; CAA59982." evidence="5" ref="1">
    <original>G</original>
    <variation>R</variation>
    <location>
        <position position="132"/>
    </location>
</feature>
<feature type="sequence conflict" description="In Ref. 1; CAA59982." evidence="5" ref="1">
    <original>AA</original>
    <variation>PP</variation>
    <location>
        <begin position="175"/>
        <end position="176"/>
    </location>
</feature>
<feature type="sequence conflict" description="In Ref. 1; CAA59982." evidence="5" ref="1">
    <original>FA</original>
    <variation>LP</variation>
    <location>
        <begin position="354"/>
        <end position="355"/>
    </location>
</feature>
<feature type="sequence conflict" description="In Ref. 1; CAA59982." evidence="5" ref="1">
    <original>A</original>
    <variation>G</variation>
    <location>
        <position position="401"/>
    </location>
</feature>
<feature type="sequence conflict" description="In Ref. 1; CAA59982." evidence="5" ref="1">
    <original>S</original>
    <variation>R</variation>
    <location>
        <position position="466"/>
    </location>
</feature>
<feature type="sequence conflict" description="In Ref. 1; CAA59982." evidence="5" ref="1">
    <original>I</original>
    <variation>V</variation>
    <location>
        <position position="501"/>
    </location>
</feature>
<feature type="sequence conflict" description="In Ref. 1; CAA59982." evidence="5" ref="1">
    <original>S</original>
    <variation>A</variation>
    <location>
        <position position="505"/>
    </location>
</feature>
<comment type="function">
    <text>Inhibits axonal extension by providing local signals to specify territories inaccessible for growing axons.</text>
</comment>
<comment type="subcellular location">
    <subcellularLocation>
        <location evidence="1">Secreted</location>
    </subcellularLocation>
</comment>
<comment type="developmental stage">
    <text>Expressed from day 10 in the embryo. Low levels found between days 10-12. Expression peaks on day 13 with moderate levels from then until birth.</text>
</comment>
<comment type="similarity">
    <text evidence="5">Belongs to the semaphorin family.</text>
</comment>
<protein>
    <recommendedName>
        <fullName>Semaphorin-3B</fullName>
    </recommendedName>
    <alternativeName>
        <fullName>Semaphorin-A</fullName>
        <shortName>Sema A</shortName>
    </alternativeName>
</protein>
<accession>Q62177</accession>
<accession>E9Q9Q1</accession>
<organism>
    <name type="scientific">Mus musculus</name>
    <name type="common">Mouse</name>
    <dbReference type="NCBI Taxonomy" id="10090"/>
    <lineage>
        <taxon>Eukaryota</taxon>
        <taxon>Metazoa</taxon>
        <taxon>Chordata</taxon>
        <taxon>Craniata</taxon>
        <taxon>Vertebrata</taxon>
        <taxon>Euteleostomi</taxon>
        <taxon>Mammalia</taxon>
        <taxon>Eutheria</taxon>
        <taxon>Euarchontoglires</taxon>
        <taxon>Glires</taxon>
        <taxon>Rodentia</taxon>
        <taxon>Myomorpha</taxon>
        <taxon>Muroidea</taxon>
        <taxon>Muridae</taxon>
        <taxon>Murinae</taxon>
        <taxon>Mus</taxon>
        <taxon>Mus</taxon>
    </lineage>
</organism>